<protein>
    <recommendedName>
        <fullName evidence="1">Large ribosomal subunit protein bL34</fullName>
    </recommendedName>
    <alternativeName>
        <fullName evidence="3">50S ribosomal protein L34</fullName>
    </alternativeName>
</protein>
<comment type="similarity">
    <text evidence="1">Belongs to the bacterial ribosomal protein bL34 family.</text>
</comment>
<organism>
    <name type="scientific">Staphylococcus aureus (strain USA300)</name>
    <dbReference type="NCBI Taxonomy" id="367830"/>
    <lineage>
        <taxon>Bacteria</taxon>
        <taxon>Bacillati</taxon>
        <taxon>Bacillota</taxon>
        <taxon>Bacilli</taxon>
        <taxon>Bacillales</taxon>
        <taxon>Staphylococcaceae</taxon>
        <taxon>Staphylococcus</taxon>
    </lineage>
</organism>
<name>RL34_STAA3</name>
<evidence type="ECO:0000255" key="1">
    <source>
        <dbReference type="HAMAP-Rule" id="MF_00391"/>
    </source>
</evidence>
<evidence type="ECO:0000256" key="2">
    <source>
        <dbReference type="SAM" id="MobiDB-lite"/>
    </source>
</evidence>
<evidence type="ECO:0000305" key="3"/>
<accession>Q2FDE6</accession>
<keyword id="KW-0687">Ribonucleoprotein</keyword>
<keyword id="KW-0689">Ribosomal protein</keyword>
<sequence>MVKRTYQPNKRKHSKVHGFRKRMSTKNGRKVLARRRRKGRKVLSA</sequence>
<feature type="chain" id="PRO_1000013456" description="Large ribosomal subunit protein bL34">
    <location>
        <begin position="1"/>
        <end position="45"/>
    </location>
</feature>
<feature type="region of interest" description="Disordered" evidence="2">
    <location>
        <begin position="1"/>
        <end position="45"/>
    </location>
</feature>
<dbReference type="EMBL" id="CP000255">
    <property type="protein sequence ID" value="ABD22263.1"/>
    <property type="molecule type" value="Genomic_DNA"/>
</dbReference>
<dbReference type="RefSeq" id="WP_000240855.1">
    <property type="nucleotide sequence ID" value="NZ_CP027476.1"/>
</dbReference>
<dbReference type="SMR" id="Q2FDE6"/>
<dbReference type="GeneID" id="98347025"/>
<dbReference type="KEGG" id="saa:SAUSA300_2648"/>
<dbReference type="HOGENOM" id="CLU_129938_2_0_9"/>
<dbReference type="Proteomes" id="UP000001939">
    <property type="component" value="Chromosome"/>
</dbReference>
<dbReference type="GO" id="GO:1990904">
    <property type="term" value="C:ribonucleoprotein complex"/>
    <property type="evidence" value="ECO:0007669"/>
    <property type="project" value="UniProtKB-KW"/>
</dbReference>
<dbReference type="GO" id="GO:0005840">
    <property type="term" value="C:ribosome"/>
    <property type="evidence" value="ECO:0007669"/>
    <property type="project" value="UniProtKB-KW"/>
</dbReference>
<dbReference type="GO" id="GO:0003735">
    <property type="term" value="F:structural constituent of ribosome"/>
    <property type="evidence" value="ECO:0007669"/>
    <property type="project" value="InterPro"/>
</dbReference>
<dbReference type="GO" id="GO:0006412">
    <property type="term" value="P:translation"/>
    <property type="evidence" value="ECO:0007669"/>
    <property type="project" value="UniProtKB-UniRule"/>
</dbReference>
<dbReference type="FunFam" id="1.10.287.3980:FF:000001">
    <property type="entry name" value="Mitochondrial ribosomal protein L34"/>
    <property type="match status" value="1"/>
</dbReference>
<dbReference type="Gene3D" id="1.10.287.3980">
    <property type="match status" value="1"/>
</dbReference>
<dbReference type="HAMAP" id="MF_00391">
    <property type="entry name" value="Ribosomal_bL34"/>
    <property type="match status" value="1"/>
</dbReference>
<dbReference type="InterPro" id="IPR000271">
    <property type="entry name" value="Ribosomal_bL34"/>
</dbReference>
<dbReference type="InterPro" id="IPR020939">
    <property type="entry name" value="Ribosomal_bL34_CS"/>
</dbReference>
<dbReference type="NCBIfam" id="TIGR01030">
    <property type="entry name" value="rpmH_bact"/>
    <property type="match status" value="1"/>
</dbReference>
<dbReference type="PANTHER" id="PTHR14503:SF4">
    <property type="entry name" value="LARGE RIBOSOMAL SUBUNIT PROTEIN BL34M"/>
    <property type="match status" value="1"/>
</dbReference>
<dbReference type="PANTHER" id="PTHR14503">
    <property type="entry name" value="MITOCHONDRIAL RIBOSOMAL PROTEIN 34 FAMILY MEMBER"/>
    <property type="match status" value="1"/>
</dbReference>
<dbReference type="Pfam" id="PF00468">
    <property type="entry name" value="Ribosomal_L34"/>
    <property type="match status" value="1"/>
</dbReference>
<dbReference type="PROSITE" id="PS00784">
    <property type="entry name" value="RIBOSOMAL_L34"/>
    <property type="match status" value="1"/>
</dbReference>
<proteinExistence type="inferred from homology"/>
<gene>
    <name evidence="1" type="primary">rpmH</name>
    <name type="ordered locus">SAUSA300_2648</name>
</gene>
<reference key="1">
    <citation type="journal article" date="2006" name="Lancet">
        <title>Complete genome sequence of USA300, an epidemic clone of community-acquired meticillin-resistant Staphylococcus aureus.</title>
        <authorList>
            <person name="Diep B.A."/>
            <person name="Gill S.R."/>
            <person name="Chang R.F."/>
            <person name="Phan T.H."/>
            <person name="Chen J.H."/>
            <person name="Davidson M.G."/>
            <person name="Lin F."/>
            <person name="Lin J."/>
            <person name="Carleton H.A."/>
            <person name="Mongodin E.F."/>
            <person name="Sensabaugh G.F."/>
            <person name="Perdreau-Remington F."/>
        </authorList>
    </citation>
    <scope>NUCLEOTIDE SEQUENCE [LARGE SCALE GENOMIC DNA]</scope>
    <source>
        <strain>USA300</strain>
    </source>
</reference>